<organism>
    <name type="scientific">Shewanella sp. (strain ANA-3)</name>
    <dbReference type="NCBI Taxonomy" id="94122"/>
    <lineage>
        <taxon>Bacteria</taxon>
        <taxon>Pseudomonadati</taxon>
        <taxon>Pseudomonadota</taxon>
        <taxon>Gammaproteobacteria</taxon>
        <taxon>Alteromonadales</taxon>
        <taxon>Shewanellaceae</taxon>
        <taxon>Shewanella</taxon>
    </lineage>
</organism>
<evidence type="ECO:0000255" key="1">
    <source>
        <dbReference type="HAMAP-Rule" id="MF_01588"/>
    </source>
</evidence>
<evidence type="ECO:0000305" key="2"/>
<comment type="function">
    <text evidence="1">DNA ligase that catalyzes the formation of phosphodiester linkages between 5'-phosphoryl and 3'-hydroxyl groups in double-stranded DNA using NAD as a coenzyme and as the energy source for the reaction. It is essential for DNA replication and repair of damaged DNA.</text>
</comment>
<comment type="catalytic activity">
    <reaction evidence="1">
        <text>NAD(+) + (deoxyribonucleotide)n-3'-hydroxyl + 5'-phospho-(deoxyribonucleotide)m = (deoxyribonucleotide)n+m + AMP + beta-nicotinamide D-nucleotide.</text>
        <dbReference type="EC" id="6.5.1.2"/>
    </reaction>
</comment>
<comment type="cofactor">
    <cofactor evidence="1">
        <name>Mg(2+)</name>
        <dbReference type="ChEBI" id="CHEBI:18420"/>
    </cofactor>
    <cofactor evidence="1">
        <name>Mn(2+)</name>
        <dbReference type="ChEBI" id="CHEBI:29035"/>
    </cofactor>
</comment>
<comment type="similarity">
    <text evidence="1">Belongs to the NAD-dependent DNA ligase family. LigA subfamily.</text>
</comment>
<comment type="sequence caution" evidence="2">
    <conflict type="erroneous initiation">
        <sequence resource="EMBL-CDS" id="ABK47803"/>
    </conflict>
</comment>
<accession>A0KVI4</accession>
<dbReference type="EC" id="6.5.1.2" evidence="1"/>
<dbReference type="EMBL" id="CP000469">
    <property type="protein sequence ID" value="ABK47803.1"/>
    <property type="status" value="ALT_INIT"/>
    <property type="molecule type" value="Genomic_DNA"/>
</dbReference>
<dbReference type="RefSeq" id="WP_041412983.1">
    <property type="nucleotide sequence ID" value="NC_008577.1"/>
</dbReference>
<dbReference type="SMR" id="A0KVI4"/>
<dbReference type="STRING" id="94122.Shewana3_1569"/>
<dbReference type="KEGG" id="shn:Shewana3_1569"/>
<dbReference type="eggNOG" id="COG0272">
    <property type="taxonomic scope" value="Bacteria"/>
</dbReference>
<dbReference type="HOGENOM" id="CLU_007764_2_1_6"/>
<dbReference type="OrthoDB" id="9759736at2"/>
<dbReference type="Proteomes" id="UP000002589">
    <property type="component" value="Chromosome"/>
</dbReference>
<dbReference type="GO" id="GO:0005829">
    <property type="term" value="C:cytosol"/>
    <property type="evidence" value="ECO:0007669"/>
    <property type="project" value="TreeGrafter"/>
</dbReference>
<dbReference type="GO" id="GO:0003677">
    <property type="term" value="F:DNA binding"/>
    <property type="evidence" value="ECO:0007669"/>
    <property type="project" value="InterPro"/>
</dbReference>
<dbReference type="GO" id="GO:0003911">
    <property type="term" value="F:DNA ligase (NAD+) activity"/>
    <property type="evidence" value="ECO:0007669"/>
    <property type="project" value="UniProtKB-UniRule"/>
</dbReference>
<dbReference type="GO" id="GO:0046872">
    <property type="term" value="F:metal ion binding"/>
    <property type="evidence" value="ECO:0007669"/>
    <property type="project" value="UniProtKB-KW"/>
</dbReference>
<dbReference type="GO" id="GO:0006281">
    <property type="term" value="P:DNA repair"/>
    <property type="evidence" value="ECO:0007669"/>
    <property type="project" value="UniProtKB-KW"/>
</dbReference>
<dbReference type="GO" id="GO:0006260">
    <property type="term" value="P:DNA replication"/>
    <property type="evidence" value="ECO:0007669"/>
    <property type="project" value="UniProtKB-KW"/>
</dbReference>
<dbReference type="CDD" id="cd17748">
    <property type="entry name" value="BRCT_DNA_ligase_like"/>
    <property type="match status" value="1"/>
</dbReference>
<dbReference type="CDD" id="cd00114">
    <property type="entry name" value="LIGANc"/>
    <property type="match status" value="1"/>
</dbReference>
<dbReference type="FunFam" id="1.10.150.20:FF:000006">
    <property type="entry name" value="DNA ligase"/>
    <property type="match status" value="1"/>
</dbReference>
<dbReference type="FunFam" id="1.10.150.20:FF:000007">
    <property type="entry name" value="DNA ligase"/>
    <property type="match status" value="1"/>
</dbReference>
<dbReference type="FunFam" id="1.10.287.610:FF:000002">
    <property type="entry name" value="DNA ligase"/>
    <property type="match status" value="1"/>
</dbReference>
<dbReference type="FunFam" id="2.40.50.140:FF:000012">
    <property type="entry name" value="DNA ligase"/>
    <property type="match status" value="1"/>
</dbReference>
<dbReference type="FunFam" id="3.30.470.30:FF:000001">
    <property type="entry name" value="DNA ligase"/>
    <property type="match status" value="1"/>
</dbReference>
<dbReference type="FunFam" id="6.20.10.30:FF:000001">
    <property type="entry name" value="DNA ligase"/>
    <property type="match status" value="1"/>
</dbReference>
<dbReference type="Gene3D" id="6.20.10.30">
    <property type="match status" value="1"/>
</dbReference>
<dbReference type="Gene3D" id="1.10.150.20">
    <property type="entry name" value="5' to 3' exonuclease, C-terminal subdomain"/>
    <property type="match status" value="2"/>
</dbReference>
<dbReference type="Gene3D" id="3.40.50.10190">
    <property type="entry name" value="BRCT domain"/>
    <property type="match status" value="1"/>
</dbReference>
<dbReference type="Gene3D" id="3.30.470.30">
    <property type="entry name" value="DNA ligase/mRNA capping enzyme"/>
    <property type="match status" value="1"/>
</dbReference>
<dbReference type="Gene3D" id="1.10.287.610">
    <property type="entry name" value="Helix hairpin bin"/>
    <property type="match status" value="1"/>
</dbReference>
<dbReference type="Gene3D" id="2.40.50.140">
    <property type="entry name" value="Nucleic acid-binding proteins"/>
    <property type="match status" value="1"/>
</dbReference>
<dbReference type="HAMAP" id="MF_01588">
    <property type="entry name" value="DNA_ligase_A"/>
    <property type="match status" value="1"/>
</dbReference>
<dbReference type="InterPro" id="IPR001357">
    <property type="entry name" value="BRCT_dom"/>
</dbReference>
<dbReference type="InterPro" id="IPR036420">
    <property type="entry name" value="BRCT_dom_sf"/>
</dbReference>
<dbReference type="InterPro" id="IPR041663">
    <property type="entry name" value="DisA/LigA_HHH"/>
</dbReference>
<dbReference type="InterPro" id="IPR001679">
    <property type="entry name" value="DNA_ligase"/>
</dbReference>
<dbReference type="InterPro" id="IPR018239">
    <property type="entry name" value="DNA_ligase_AS"/>
</dbReference>
<dbReference type="InterPro" id="IPR033136">
    <property type="entry name" value="DNA_ligase_CS"/>
</dbReference>
<dbReference type="InterPro" id="IPR013839">
    <property type="entry name" value="DNAligase_adenylation"/>
</dbReference>
<dbReference type="InterPro" id="IPR013840">
    <property type="entry name" value="DNAligase_N"/>
</dbReference>
<dbReference type="InterPro" id="IPR003583">
    <property type="entry name" value="Hlx-hairpin-Hlx_DNA-bd_motif"/>
</dbReference>
<dbReference type="InterPro" id="IPR012340">
    <property type="entry name" value="NA-bd_OB-fold"/>
</dbReference>
<dbReference type="InterPro" id="IPR004150">
    <property type="entry name" value="NAD_DNA_ligase_OB"/>
</dbReference>
<dbReference type="InterPro" id="IPR010994">
    <property type="entry name" value="RuvA_2-like"/>
</dbReference>
<dbReference type="InterPro" id="IPR004149">
    <property type="entry name" value="Znf_DNAligase_C4"/>
</dbReference>
<dbReference type="NCBIfam" id="TIGR00575">
    <property type="entry name" value="dnlj"/>
    <property type="match status" value="1"/>
</dbReference>
<dbReference type="NCBIfam" id="NF005932">
    <property type="entry name" value="PRK07956.1"/>
    <property type="match status" value="1"/>
</dbReference>
<dbReference type="PANTHER" id="PTHR23389">
    <property type="entry name" value="CHROMOSOME TRANSMISSION FIDELITY FACTOR 18"/>
    <property type="match status" value="1"/>
</dbReference>
<dbReference type="PANTHER" id="PTHR23389:SF9">
    <property type="entry name" value="DNA LIGASE"/>
    <property type="match status" value="1"/>
</dbReference>
<dbReference type="Pfam" id="PF00533">
    <property type="entry name" value="BRCT"/>
    <property type="match status" value="1"/>
</dbReference>
<dbReference type="Pfam" id="PF01653">
    <property type="entry name" value="DNA_ligase_aden"/>
    <property type="match status" value="1"/>
</dbReference>
<dbReference type="Pfam" id="PF03120">
    <property type="entry name" value="DNA_ligase_OB"/>
    <property type="match status" value="1"/>
</dbReference>
<dbReference type="Pfam" id="PF03119">
    <property type="entry name" value="DNA_ligase_ZBD"/>
    <property type="match status" value="1"/>
</dbReference>
<dbReference type="Pfam" id="PF12826">
    <property type="entry name" value="HHH_2"/>
    <property type="match status" value="1"/>
</dbReference>
<dbReference type="Pfam" id="PF14520">
    <property type="entry name" value="HHH_5"/>
    <property type="match status" value="1"/>
</dbReference>
<dbReference type="PIRSF" id="PIRSF001604">
    <property type="entry name" value="LigA"/>
    <property type="match status" value="1"/>
</dbReference>
<dbReference type="SMART" id="SM00292">
    <property type="entry name" value="BRCT"/>
    <property type="match status" value="1"/>
</dbReference>
<dbReference type="SMART" id="SM00278">
    <property type="entry name" value="HhH1"/>
    <property type="match status" value="3"/>
</dbReference>
<dbReference type="SMART" id="SM00532">
    <property type="entry name" value="LIGANc"/>
    <property type="match status" value="1"/>
</dbReference>
<dbReference type="SUPFAM" id="SSF52113">
    <property type="entry name" value="BRCT domain"/>
    <property type="match status" value="1"/>
</dbReference>
<dbReference type="SUPFAM" id="SSF56091">
    <property type="entry name" value="DNA ligase/mRNA capping enzyme, catalytic domain"/>
    <property type="match status" value="1"/>
</dbReference>
<dbReference type="SUPFAM" id="SSF50249">
    <property type="entry name" value="Nucleic acid-binding proteins"/>
    <property type="match status" value="1"/>
</dbReference>
<dbReference type="SUPFAM" id="SSF47781">
    <property type="entry name" value="RuvA domain 2-like"/>
    <property type="match status" value="1"/>
</dbReference>
<dbReference type="PROSITE" id="PS50172">
    <property type="entry name" value="BRCT"/>
    <property type="match status" value="1"/>
</dbReference>
<dbReference type="PROSITE" id="PS01055">
    <property type="entry name" value="DNA_LIGASE_N1"/>
    <property type="match status" value="1"/>
</dbReference>
<dbReference type="PROSITE" id="PS01056">
    <property type="entry name" value="DNA_LIGASE_N2"/>
    <property type="match status" value="1"/>
</dbReference>
<feature type="chain" id="PRO_0000313430" description="DNA ligase">
    <location>
        <begin position="1"/>
        <end position="689"/>
    </location>
</feature>
<feature type="domain" description="BRCT" evidence="1">
    <location>
        <begin position="609"/>
        <end position="689"/>
    </location>
</feature>
<feature type="active site" description="N6-AMP-lysine intermediate" evidence="1">
    <location>
        <position position="131"/>
    </location>
</feature>
<feature type="binding site" evidence="1">
    <location>
        <begin position="51"/>
        <end position="55"/>
    </location>
    <ligand>
        <name>NAD(+)</name>
        <dbReference type="ChEBI" id="CHEBI:57540"/>
    </ligand>
</feature>
<feature type="binding site" evidence="1">
    <location>
        <begin position="100"/>
        <end position="101"/>
    </location>
    <ligand>
        <name>NAD(+)</name>
        <dbReference type="ChEBI" id="CHEBI:57540"/>
    </ligand>
</feature>
<feature type="binding site" evidence="1">
    <location>
        <position position="129"/>
    </location>
    <ligand>
        <name>NAD(+)</name>
        <dbReference type="ChEBI" id="CHEBI:57540"/>
    </ligand>
</feature>
<feature type="binding site" evidence="1">
    <location>
        <position position="152"/>
    </location>
    <ligand>
        <name>NAD(+)</name>
        <dbReference type="ChEBI" id="CHEBI:57540"/>
    </ligand>
</feature>
<feature type="binding site" evidence="1">
    <location>
        <position position="189"/>
    </location>
    <ligand>
        <name>NAD(+)</name>
        <dbReference type="ChEBI" id="CHEBI:57540"/>
    </ligand>
</feature>
<feature type="binding site" evidence="1">
    <location>
        <position position="308"/>
    </location>
    <ligand>
        <name>NAD(+)</name>
        <dbReference type="ChEBI" id="CHEBI:57540"/>
    </ligand>
</feature>
<feature type="binding site" evidence="1">
    <location>
        <position position="332"/>
    </location>
    <ligand>
        <name>NAD(+)</name>
        <dbReference type="ChEBI" id="CHEBI:57540"/>
    </ligand>
</feature>
<feature type="binding site" evidence="1">
    <location>
        <position position="426"/>
    </location>
    <ligand>
        <name>Zn(2+)</name>
        <dbReference type="ChEBI" id="CHEBI:29105"/>
    </ligand>
</feature>
<feature type="binding site" evidence="1">
    <location>
        <position position="429"/>
    </location>
    <ligand>
        <name>Zn(2+)</name>
        <dbReference type="ChEBI" id="CHEBI:29105"/>
    </ligand>
</feature>
<feature type="binding site" evidence="1">
    <location>
        <position position="444"/>
    </location>
    <ligand>
        <name>Zn(2+)</name>
        <dbReference type="ChEBI" id="CHEBI:29105"/>
    </ligand>
</feature>
<feature type="binding site" evidence="1">
    <location>
        <position position="450"/>
    </location>
    <ligand>
        <name>Zn(2+)</name>
        <dbReference type="ChEBI" id="CHEBI:29105"/>
    </ligand>
</feature>
<reference key="1">
    <citation type="submission" date="2006-09" db="EMBL/GenBank/DDBJ databases">
        <title>Complete sequence of chromosome 1 of Shewanella sp. ANA-3.</title>
        <authorList>
            <person name="Copeland A."/>
            <person name="Lucas S."/>
            <person name="Lapidus A."/>
            <person name="Barry K."/>
            <person name="Detter J.C."/>
            <person name="Glavina del Rio T."/>
            <person name="Hammon N."/>
            <person name="Israni S."/>
            <person name="Dalin E."/>
            <person name="Tice H."/>
            <person name="Pitluck S."/>
            <person name="Chertkov O."/>
            <person name="Brettin T."/>
            <person name="Bruce D."/>
            <person name="Han C."/>
            <person name="Tapia R."/>
            <person name="Gilna P."/>
            <person name="Schmutz J."/>
            <person name="Larimer F."/>
            <person name="Land M."/>
            <person name="Hauser L."/>
            <person name="Kyrpides N."/>
            <person name="Kim E."/>
            <person name="Newman D."/>
            <person name="Salticov C."/>
            <person name="Konstantinidis K."/>
            <person name="Klappenback J."/>
            <person name="Tiedje J."/>
            <person name="Richardson P."/>
        </authorList>
    </citation>
    <scope>NUCLEOTIDE SEQUENCE [LARGE SCALE GENOMIC DNA]</scope>
    <source>
        <strain>ANA-3</strain>
    </source>
</reference>
<sequence length="689" mass="75120">MQDIQLDKRLSELLSQAVTPHNAQPIMQALCQSLNEHNIRYYVDDAPSITDSEYDRLMQRLKQLEAEYPQFVAADSPTQRVGGMALAKFEQITHLKPMLSLDNAFDEADFSAFHKRVSDRVGEVSFCCEPKLDGLAVSILYRNGVLERAATRGDGTVGEDITENVKTIKSIPLKLRGDNYPELVEVRGEAFMPKAAFEALNERARLKDEKLFVNPRNAAAGSLRQLDSKITASRALSFYAYALGVVEPTSHELAKTHYEQLQQLKSWGLPVSSEIKVCDELSQVFAYYQDILTRRADLPFEIDGVVMKVNDIAQQQTLGFVAKSPRWAIAYKFPAQEEMTLLEGVDFQVGRTGAVTPVARLKPVFVGGVTVSNATLHNADEIARLGVMVGDTVIIRRAGDVIPQIVAIVPERRPEDAKAIAFPQHCPVCGSLVERLEGEAVARCSGGLFCEAQRKEAIKHFASRKALDIDGMGDKIVEQLIDKELVQSPADLFKLTASMMTMLDRMGIKSATNLALAIEAAKTTTLPRFLYALGIREVGETTAANLATHFGSLEALRVATIEQLIQVEDIGEVVAQHVAHFFAQPHNLEVIDALIAAGVNWPAIAAPSADEQPLKGQTWVLTGTLNQLNRNDAKAQLQALGAKVAGSVSKNTDCLVAGEAAGSKLAKAQELGVKVIGEDELLALLAANS</sequence>
<name>DNLJ_SHESA</name>
<gene>
    <name evidence="1" type="primary">ligA</name>
    <name type="ordered locus">Shewana3_1569</name>
</gene>
<protein>
    <recommendedName>
        <fullName evidence="1">DNA ligase</fullName>
        <ecNumber evidence="1">6.5.1.2</ecNumber>
    </recommendedName>
    <alternativeName>
        <fullName evidence="1">Polydeoxyribonucleotide synthase [NAD(+)]</fullName>
    </alternativeName>
</protein>
<keyword id="KW-0227">DNA damage</keyword>
<keyword id="KW-0234">DNA repair</keyword>
<keyword id="KW-0235">DNA replication</keyword>
<keyword id="KW-0436">Ligase</keyword>
<keyword id="KW-0460">Magnesium</keyword>
<keyword id="KW-0464">Manganese</keyword>
<keyword id="KW-0479">Metal-binding</keyword>
<keyword id="KW-0520">NAD</keyword>
<keyword id="KW-0862">Zinc</keyword>
<proteinExistence type="inferred from homology"/>